<keyword id="KW-1003">Cell membrane</keyword>
<keyword id="KW-0158">Chromosome</keyword>
<keyword id="KW-0963">Cytoplasm</keyword>
<keyword id="KW-0233">DNA recombination</keyword>
<keyword id="KW-0469">Meiosis</keyword>
<keyword id="KW-0472">Membrane</keyword>
<keyword id="KW-0539">Nucleus</keyword>
<keyword id="KW-1185">Reference proteome</keyword>
<sequence length="1709" mass="191109">MRTRFLATDYFAPSSSSAAGKALALEFFSFPSLPVPALPPDPHFLPFTSADELPAATVADDGLGPLPIASALSDFLAAVIPQALPVPTVPAADEVLDDFLYDRGGYGEDFSSWEFGAFRIPKASEGYGVINREKDEKGEGSRSDGLEISSVMKRWEQLKELRFEVVEVDLLMALQEDIASFGEEESGGGVTLLLRVPDMKIHLDFIDIETDIKIRYQSDLPESVYQVEKVPVKDNDGNGHSSLREDCCLEIAALDHGAVIPRLEVSRNSWELDDCLTETDRYGVFDNVVRHLDEAQIQHSVFKSTEFLRSTDMDMLTFVCEDAPCHDIQVDKPAEIKAAVEMDVVRINGNILLEKNSALYPLKPDGTCSDLPCSILLEEVQIIDFPSDNVFKMLVQSETNKMNISDEIFKDDFDPARRLYESMVSCELALVDDTFRSLPTPILNDDIAVRSRVPPIQEILCSLKPHPLSASDGIYLDWHLLLEGPCNREICCSYASMVEEAKTCHLSSELQRSCQSTSVFVSDFLEDFQRSPKLQDEDKHSDIYVPAPLSHDPQKLEATQKCEQEGGTRNHSSMKRPSPEKSSSFPELISHSGDLNFYLNVRSATKSGTNNENTSTLDVPHSEEQALSLSTRAKVDKLIEIHPVSPSNLIQGLIEQIHASYTSALQESTYWRHSFSDEQGLGISKQKLLELITGEGSEGSYNHCEHKDKMELIVLYALKQVAYYLCFFGLHAAHLYISNLTRSLENTPERLKHILWSISEAQRKSERQLFESHPSLSCIETILRSNKQIDQKILIVADRAFWLPLGQKLASMRMTFVEFGQNPATTFVDLVNKTNSTAWVLEELLKSDCILLDNKNIPASFPFDKFGIILEYGGPNKSSTLLSLAPKLDGLPPLHFLYVKVDGKDFPAALVEDNHKDQDLKSTLDKVLLTLQKDLQERMNKMRIVDSLNFIPATNQLQGLQEKRSKHFAADATKELLPDDQPHRLQNLNKKNTFDSHNVVLADEQLHIQQTLSNKPVVNSQCVPTVEKSSSTSSVSANVLKDPQENQSTTDLPSCVKNDCIMPGRLSVPDVVIVVNTGNHGKTMLVSRRSSYQQILALEKGGMQVVERDIDLPVDLILSAAVCLVWYETALFEANELTTSAETSGIKENVENIATNILMSVSFSFTGCIMVFEGEADFLSAVMDSSDSLYTAAASLDMNLQLFFSHTPRSTDEIILNCITNVTSCYKAPLPDIPESESLAESFLTSFPSINPVSAYMLLSSGGSLVEFLSWPHERRIQAVGKYLLSPKIISLFNALCKFGELGESRSVMTECSSVDSDISSAFLQSPRKRKQRSLQACAVPTNKLLFSDSLNQIPGDYAEHAEVFSPSKLRKFSDMDNTIPELPDVFTFDESLNMRSEGFSYQQKKHDVDAIPGNQVINDDFSNGLTPNNQAYNRRTGNMVDTFDLPWQPEFGGTHPSKSTFHTSRPSCSRTHSNPVFSTAFEINDDPGEWNISGGTKQTWKGLAHGGTVDDSYRYDMDNRYHEPRDEIMQHPASSLAFQKLDFGSHATSQGSCWEIDYLRQMSAKRKARQERSRCSNSPGMSIPRMRDSNSKILNPPPKESFRYRGDRDTPSRDQSPSIGTQHYGKGKEGAKAQNRRARKDFNVQPTSHKKRIEPSIDPTWTPIDKRARQKLSFVTYGKEKQSKLVWRNQNSPGVGCGFRKRFREEGT</sequence>
<evidence type="ECO:0000256" key="1">
    <source>
        <dbReference type="SAM" id="MobiDB-lite"/>
    </source>
</evidence>
<evidence type="ECO:0000269" key="2">
    <source>
    </source>
</evidence>
<evidence type="ECO:0000269" key="3">
    <source>
    </source>
</evidence>
<evidence type="ECO:0000303" key="4">
    <source>
    </source>
</evidence>
<evidence type="ECO:0000303" key="5">
    <source>
    </source>
</evidence>
<evidence type="ECO:0000305" key="6"/>
<evidence type="ECO:0000312" key="7">
    <source>
        <dbReference type="EMBL" id="BAD25234.1"/>
    </source>
</evidence>
<evidence type="ECO:0000312" key="8">
    <source>
        <dbReference type="EMBL" id="BAF09470.2"/>
    </source>
</evidence>
<evidence type="ECO:0000312" key="9">
    <source>
        <dbReference type="EMBL" id="EEE57462.1"/>
    </source>
</evidence>
<dbReference type="EMBL" id="AP004133">
    <property type="protein sequence ID" value="BAD25234.1"/>
    <property type="status" value="ALT_SEQ"/>
    <property type="molecule type" value="Genomic_DNA"/>
</dbReference>
<dbReference type="EMBL" id="AP008208">
    <property type="protein sequence ID" value="BAF09470.2"/>
    <property type="status" value="ALT_SEQ"/>
    <property type="molecule type" value="Genomic_DNA"/>
</dbReference>
<dbReference type="EMBL" id="AP014958">
    <property type="protein sequence ID" value="BAS79998.1"/>
    <property type="status" value="ALT_SEQ"/>
    <property type="molecule type" value="Genomic_DNA"/>
</dbReference>
<dbReference type="EMBL" id="CM000139">
    <property type="protein sequence ID" value="EEE57462.1"/>
    <property type="molecule type" value="Genomic_DNA"/>
</dbReference>
<dbReference type="FunCoup" id="B9F1C0">
    <property type="interactions" value="670"/>
</dbReference>
<dbReference type="STRING" id="39947.B9F1C0"/>
<dbReference type="PaxDb" id="39947-B9F1C0"/>
<dbReference type="KEGG" id="dosa:Os02g0642600"/>
<dbReference type="eggNOG" id="ENOG502QT2G">
    <property type="taxonomic scope" value="Eukaryota"/>
</dbReference>
<dbReference type="HOGENOM" id="CLU_244058_0_0_1"/>
<dbReference type="InParanoid" id="B9F1C0"/>
<dbReference type="Proteomes" id="UP000000763">
    <property type="component" value="Chromosome 2"/>
</dbReference>
<dbReference type="Proteomes" id="UP000007752">
    <property type="component" value="Chromosome 2"/>
</dbReference>
<dbReference type="Proteomes" id="UP000059680">
    <property type="component" value="Chromosome 2"/>
</dbReference>
<dbReference type="GO" id="GO:0005694">
    <property type="term" value="C:chromosome"/>
    <property type="evidence" value="ECO:0000314"/>
    <property type="project" value="UniProtKB"/>
</dbReference>
<dbReference type="GO" id="GO:0005737">
    <property type="term" value="C:cytoplasm"/>
    <property type="evidence" value="ECO:0007669"/>
    <property type="project" value="UniProtKB-SubCell"/>
</dbReference>
<dbReference type="GO" id="GO:0005634">
    <property type="term" value="C:nucleus"/>
    <property type="evidence" value="ECO:0000314"/>
    <property type="project" value="UniProtKB"/>
</dbReference>
<dbReference type="GO" id="GO:0005886">
    <property type="term" value="C:plasma membrane"/>
    <property type="evidence" value="ECO:0007669"/>
    <property type="project" value="UniProtKB-SubCell"/>
</dbReference>
<dbReference type="GO" id="GO:0007131">
    <property type="term" value="P:reciprocal meiotic recombination"/>
    <property type="evidence" value="ECO:0000315"/>
    <property type="project" value="UniProtKB"/>
</dbReference>
<dbReference type="GO" id="GO:0000712">
    <property type="term" value="P:resolution of meiotic recombination intermediates"/>
    <property type="evidence" value="ECO:0000318"/>
    <property type="project" value="GO_Central"/>
</dbReference>
<dbReference type="InterPro" id="IPR038824">
    <property type="entry name" value="SHOC1-like"/>
</dbReference>
<dbReference type="PANTHER" id="PTHR35764">
    <property type="entry name" value="PROTEIN SHORTAGE IN CHIASMATA 1"/>
    <property type="match status" value="1"/>
</dbReference>
<dbReference type="PANTHER" id="PTHR35764:SF1">
    <property type="entry name" value="PROTEIN SHORTAGE IN CHIASMATA 1"/>
    <property type="match status" value="1"/>
</dbReference>
<accession>B9F1C0</accession>
<accession>A0A0P0VMC7</accession>
<accession>Q0DZ68</accession>
<accession>Q6H7R5</accession>
<protein>
    <recommendedName>
        <fullName evidence="6">Protein SHORTAGE IN CHIASMATA 1 homolog</fullName>
        <shortName evidence="4 5">OsSHOC1</shortName>
    </recommendedName>
</protein>
<feature type="chain" id="PRO_0000448442" description="Protein SHORTAGE IN CHIASMATA 1 homolog">
    <location>
        <begin position="1"/>
        <end position="1709"/>
    </location>
</feature>
<feature type="region of interest" description="Disordered" evidence="1">
    <location>
        <begin position="532"/>
        <end position="586"/>
    </location>
</feature>
<feature type="region of interest" description="Disordered" evidence="1">
    <location>
        <begin position="1566"/>
        <end position="1662"/>
    </location>
</feature>
<feature type="compositionally biased region" description="Basic and acidic residues" evidence="1">
    <location>
        <begin position="532"/>
        <end position="542"/>
    </location>
</feature>
<feature type="compositionally biased region" description="Basic and acidic residues" evidence="1">
    <location>
        <begin position="552"/>
        <end position="568"/>
    </location>
</feature>
<feature type="compositionally biased region" description="Basic and acidic residues" evidence="1">
    <location>
        <begin position="1601"/>
        <end position="1613"/>
    </location>
</feature>
<reference key="1">
    <citation type="journal article" date="2005" name="Nature">
        <title>The map-based sequence of the rice genome.</title>
        <authorList>
            <consortium name="International rice genome sequencing project (IRGSP)"/>
        </authorList>
    </citation>
    <scope>NUCLEOTIDE SEQUENCE [LARGE SCALE GENOMIC DNA]</scope>
    <source>
        <strain>cv. Nipponbare</strain>
    </source>
</reference>
<reference key="2">
    <citation type="journal article" date="2008" name="Nucleic Acids Res.">
        <title>The rice annotation project database (RAP-DB): 2008 update.</title>
        <authorList>
            <consortium name="The rice annotation project (RAP)"/>
        </authorList>
    </citation>
    <scope>GENOME REANNOTATION</scope>
    <source>
        <strain>cv. Nipponbare</strain>
    </source>
</reference>
<reference key="3">
    <citation type="journal article" date="2013" name="Rice">
        <title>Improvement of the Oryza sativa Nipponbare reference genome using next generation sequence and optical map data.</title>
        <authorList>
            <person name="Kawahara Y."/>
            <person name="de la Bastide M."/>
            <person name="Hamilton J.P."/>
            <person name="Kanamori H."/>
            <person name="McCombie W.R."/>
            <person name="Ouyang S."/>
            <person name="Schwartz D.C."/>
            <person name="Tanaka T."/>
            <person name="Wu J."/>
            <person name="Zhou S."/>
            <person name="Childs K.L."/>
            <person name="Davidson R.M."/>
            <person name="Lin H."/>
            <person name="Quesada-Ocampo L."/>
            <person name="Vaillancourt B."/>
            <person name="Sakai H."/>
            <person name="Lee S.S."/>
            <person name="Kim J."/>
            <person name="Numa H."/>
            <person name="Itoh T."/>
            <person name="Buell C.R."/>
            <person name="Matsumoto T."/>
        </authorList>
    </citation>
    <scope>GENOME REANNOTATION</scope>
    <source>
        <strain>cv. Nipponbare</strain>
    </source>
</reference>
<reference key="4">
    <citation type="journal article" date="2005" name="PLoS Biol.">
        <title>The genomes of Oryza sativa: a history of duplications.</title>
        <authorList>
            <person name="Yu J."/>
            <person name="Wang J."/>
            <person name="Lin W."/>
            <person name="Li S."/>
            <person name="Li H."/>
            <person name="Zhou J."/>
            <person name="Ni P."/>
            <person name="Dong W."/>
            <person name="Hu S."/>
            <person name="Zeng C."/>
            <person name="Zhang J."/>
            <person name="Zhang Y."/>
            <person name="Li R."/>
            <person name="Xu Z."/>
            <person name="Li S."/>
            <person name="Li X."/>
            <person name="Zheng H."/>
            <person name="Cong L."/>
            <person name="Lin L."/>
            <person name="Yin J."/>
            <person name="Geng J."/>
            <person name="Li G."/>
            <person name="Shi J."/>
            <person name="Liu J."/>
            <person name="Lv H."/>
            <person name="Li J."/>
            <person name="Wang J."/>
            <person name="Deng Y."/>
            <person name="Ran L."/>
            <person name="Shi X."/>
            <person name="Wang X."/>
            <person name="Wu Q."/>
            <person name="Li C."/>
            <person name="Ren X."/>
            <person name="Wang J."/>
            <person name="Wang X."/>
            <person name="Li D."/>
            <person name="Liu D."/>
            <person name="Zhang X."/>
            <person name="Ji Z."/>
            <person name="Zhao W."/>
            <person name="Sun Y."/>
            <person name="Zhang Z."/>
            <person name="Bao J."/>
            <person name="Han Y."/>
            <person name="Dong L."/>
            <person name="Ji J."/>
            <person name="Chen P."/>
            <person name="Wu S."/>
            <person name="Liu J."/>
            <person name="Xiao Y."/>
            <person name="Bu D."/>
            <person name="Tan J."/>
            <person name="Yang L."/>
            <person name="Ye C."/>
            <person name="Zhang J."/>
            <person name="Xu J."/>
            <person name="Zhou Y."/>
            <person name="Yu Y."/>
            <person name="Zhang B."/>
            <person name="Zhuang S."/>
            <person name="Wei H."/>
            <person name="Liu B."/>
            <person name="Lei M."/>
            <person name="Yu H."/>
            <person name="Li Y."/>
            <person name="Xu H."/>
            <person name="Wei S."/>
            <person name="He X."/>
            <person name="Fang L."/>
            <person name="Zhang Z."/>
            <person name="Zhang Y."/>
            <person name="Huang X."/>
            <person name="Su Z."/>
            <person name="Tong W."/>
            <person name="Li J."/>
            <person name="Tong Z."/>
            <person name="Li S."/>
            <person name="Ye J."/>
            <person name="Wang L."/>
            <person name="Fang L."/>
            <person name="Lei T."/>
            <person name="Chen C.-S."/>
            <person name="Chen H.-C."/>
            <person name="Xu Z."/>
            <person name="Li H."/>
            <person name="Huang H."/>
            <person name="Zhang F."/>
            <person name="Xu H."/>
            <person name="Li N."/>
            <person name="Zhao C."/>
            <person name="Li S."/>
            <person name="Dong L."/>
            <person name="Huang Y."/>
            <person name="Li L."/>
            <person name="Xi Y."/>
            <person name="Qi Q."/>
            <person name="Li W."/>
            <person name="Zhang B."/>
            <person name="Hu W."/>
            <person name="Zhang Y."/>
            <person name="Tian X."/>
            <person name="Jiao Y."/>
            <person name="Liang X."/>
            <person name="Jin J."/>
            <person name="Gao L."/>
            <person name="Zheng W."/>
            <person name="Hao B."/>
            <person name="Liu S.-M."/>
            <person name="Wang W."/>
            <person name="Yuan L."/>
            <person name="Cao M."/>
            <person name="McDermott J."/>
            <person name="Samudrala R."/>
            <person name="Wang J."/>
            <person name="Wong G.K.-S."/>
            <person name="Yang H."/>
        </authorList>
    </citation>
    <scope>NUCLEOTIDE SEQUENCE [LARGE SCALE GENOMIC DNA]</scope>
    <source>
        <strain>cv. Nipponbare</strain>
    </source>
</reference>
<reference key="5">
    <citation type="journal article" date="2019" name="Plant J.">
        <title>OsSHOC1 and OsPTD1 are essential for crossover formation during rice meiosis.</title>
        <authorList>
            <person name="Ren Y."/>
            <person name="Chen D."/>
            <person name="Li W."/>
            <person name="Zhou D."/>
            <person name="Luo T."/>
            <person name="Yuan G."/>
            <person name="Zeng J."/>
            <person name="Cao Y."/>
            <person name="He Z."/>
            <person name="Zou T."/>
            <person name="Deng Q."/>
            <person name="Wang S."/>
            <person name="Zheng A."/>
            <person name="Zhu J."/>
            <person name="Liang Y."/>
            <person name="Liu H."/>
            <person name="Wang L."/>
            <person name="Li P."/>
            <person name="Li S."/>
        </authorList>
    </citation>
    <scope>FUNCTION</scope>
    <scope>INTERACTION WITH PTD</scope>
    <scope>SUBCELLULAR LOCATION</scope>
    <scope>TISSUE SPECIFICITY</scope>
    <scope>DISRUPTION PHENOTYPE</scope>
</reference>
<reference key="6">
    <citation type="journal article" date="2019" name="Plant Physiol.">
        <title>A multiprotein complex regulates interference-sensitive crossover formation in rice.</title>
        <authorList>
            <person name="Zhang J."/>
            <person name="Wang C."/>
            <person name="Higgins J.D."/>
            <person name="Kim Y.J."/>
            <person name="Moon S."/>
            <person name="Jung K.H."/>
            <person name="Qu S."/>
            <person name="Liang W."/>
        </authorList>
    </citation>
    <scope>FUNCTION</scope>
    <scope>INTERACTION WITH PTD AND ZIP4</scope>
    <scope>SUBCELLULAR LOCATION</scope>
    <scope>DISRUPTION PHENOTYPE</scope>
</reference>
<gene>
    <name evidence="4 5" type="primary">SHOC1</name>
    <name evidence="8" type="ordered locus">Os02g0642600</name>
    <name evidence="6" type="ordered locus">LOC_Os02g42910</name>
    <name evidence="7" type="ORF">OJ1112_G03.16</name>
    <name evidence="9" type="ORF">OsJ_07694</name>
</gene>
<comment type="function">
    <text evidence="2 3">Essential for normal crossover (CO) formation during meiosis (PubMed:30589140, PubMed:31266799). Essential component for the formation of class I meiotic COs (PubMed:31266799). Interacts with PTD, another meiotic component, to regulate CO formation, possibly by stabilizing the recombination intermediates during meiosis (PubMed:30589140, PubMed:31266799). SHOC1 and PTD may form transient heterotrimeric or heterotetrameric complexes with HEI10 and/or ZIP4 to promote class I COs formation (PubMed:31266799). Does not seem to be involved in early meiotic recombination steps involving double-strand break (DSB) formation, processing, and single-strand invasion (PubMed:31266799). Does not seem to be involved in homologous pairing or synaptonemal complex (SC) assembly (PubMed:31266799).</text>
</comment>
<comment type="subunit">
    <text evidence="2 3">Interacts (via C-terminus) with PTD (PubMed:30589140, PubMed:31266799). Interacts with ZIP4 (PubMed:31266799).</text>
</comment>
<comment type="subcellular location">
    <subcellularLocation>
        <location evidence="3">Chromosome</location>
    </subcellularLocation>
    <subcellularLocation>
        <location evidence="2 3">Nucleus</location>
    </subcellularLocation>
    <subcellularLocation>
        <location evidence="2">Cytoplasm</location>
    </subcellularLocation>
    <subcellularLocation>
        <location evidence="2">Cell membrane</location>
    </subcellularLocation>
    <text evidence="2 3">Predominantly localized in the nucleus (PubMed:30589140). Localized in punctuate foci onto meiocyte chromosomes from leptotene to early pachytene with a maximal number of foci at zygotene (PubMed:31266799).</text>
</comment>
<comment type="tissue specificity">
    <text evidence="2">Highly expressed in anthers and pistil during meiosis (PubMed:30589140). Expressed in pollen mother cells (PMCs) during meiosis (PubMed:30589140). Expressed at low levels in roots, shoots, leaves, flowers, and glumes (PubMed:30589140).</text>
</comment>
<comment type="disruption phenotype">
    <text evidence="2 3">Complete sterility of male and female gametophytes due to altered meiosis (PubMed:30589140, PubMed:31266799). Striking reduction in the number of meiotic crossovers (PubMed:30589140, PubMed:31266799).</text>
</comment>
<comment type="similarity">
    <text evidence="6">Belongs to the XPF family.</text>
</comment>
<comment type="sequence caution" evidence="6">
    <conflict type="erroneous gene model prediction">
        <sequence resource="EMBL-CDS" id="BAD25234"/>
    </conflict>
</comment>
<comment type="sequence caution" evidence="6">
    <conflict type="erroneous gene model prediction">
        <sequence resource="EMBL-CDS" id="BAF09470"/>
    </conflict>
</comment>
<comment type="sequence caution" evidence="6">
    <conflict type="erroneous gene model prediction">
        <sequence resource="EMBL-CDS" id="BAS79998"/>
    </conflict>
</comment>
<organism>
    <name type="scientific">Oryza sativa subsp. japonica</name>
    <name type="common">Rice</name>
    <dbReference type="NCBI Taxonomy" id="39947"/>
    <lineage>
        <taxon>Eukaryota</taxon>
        <taxon>Viridiplantae</taxon>
        <taxon>Streptophyta</taxon>
        <taxon>Embryophyta</taxon>
        <taxon>Tracheophyta</taxon>
        <taxon>Spermatophyta</taxon>
        <taxon>Magnoliopsida</taxon>
        <taxon>Liliopsida</taxon>
        <taxon>Poales</taxon>
        <taxon>Poaceae</taxon>
        <taxon>BOP clade</taxon>
        <taxon>Oryzoideae</taxon>
        <taxon>Oryzeae</taxon>
        <taxon>Oryzinae</taxon>
        <taxon>Oryza</taxon>
        <taxon>Oryza sativa</taxon>
    </lineage>
</organism>
<proteinExistence type="evidence at protein level"/>
<name>SHOC1_ORYSJ</name>